<organism>
    <name type="scientific">Bacillus subtilis (strain 168)</name>
    <dbReference type="NCBI Taxonomy" id="224308"/>
    <lineage>
        <taxon>Bacteria</taxon>
        <taxon>Bacillati</taxon>
        <taxon>Bacillota</taxon>
        <taxon>Bacilli</taxon>
        <taxon>Bacillales</taxon>
        <taxon>Bacillaceae</taxon>
        <taxon>Bacillus</taxon>
    </lineage>
</organism>
<name>YXIK_BACSU</name>
<gene>
    <name type="primary">yxiK</name>
    <name type="ordered locus">BSU39140</name>
    <name type="ORF">SS8B</name>
</gene>
<reference key="1">
    <citation type="journal article" date="1996" name="Microbiology">
        <title>Sequencing of a 65 kb region of the Bacillus subtilis genome containing the lic and cel loci, and creation of a 177 kb contig covering the gnt-sacXY region.</title>
        <authorList>
            <person name="Yoshida K."/>
            <person name="Shindo K."/>
            <person name="Sano H."/>
            <person name="Seki S."/>
            <person name="Fujimura M."/>
            <person name="Yanai N."/>
            <person name="Miwa Y."/>
            <person name="Fujita Y."/>
        </authorList>
    </citation>
    <scope>NUCLEOTIDE SEQUENCE [GENOMIC DNA]</scope>
    <source>
        <strain>168 / BGSC1A1</strain>
    </source>
</reference>
<reference key="2">
    <citation type="journal article" date="1997" name="Nature">
        <title>The complete genome sequence of the Gram-positive bacterium Bacillus subtilis.</title>
        <authorList>
            <person name="Kunst F."/>
            <person name="Ogasawara N."/>
            <person name="Moszer I."/>
            <person name="Albertini A.M."/>
            <person name="Alloni G."/>
            <person name="Azevedo V."/>
            <person name="Bertero M.G."/>
            <person name="Bessieres P."/>
            <person name="Bolotin A."/>
            <person name="Borchert S."/>
            <person name="Borriss R."/>
            <person name="Boursier L."/>
            <person name="Brans A."/>
            <person name="Braun M."/>
            <person name="Brignell S.C."/>
            <person name="Bron S."/>
            <person name="Brouillet S."/>
            <person name="Bruschi C.V."/>
            <person name="Caldwell B."/>
            <person name="Capuano V."/>
            <person name="Carter N.M."/>
            <person name="Choi S.-K."/>
            <person name="Codani J.-J."/>
            <person name="Connerton I.F."/>
            <person name="Cummings N.J."/>
            <person name="Daniel R.A."/>
            <person name="Denizot F."/>
            <person name="Devine K.M."/>
            <person name="Duesterhoeft A."/>
            <person name="Ehrlich S.D."/>
            <person name="Emmerson P.T."/>
            <person name="Entian K.-D."/>
            <person name="Errington J."/>
            <person name="Fabret C."/>
            <person name="Ferrari E."/>
            <person name="Foulger D."/>
            <person name="Fritz C."/>
            <person name="Fujita M."/>
            <person name="Fujita Y."/>
            <person name="Fuma S."/>
            <person name="Galizzi A."/>
            <person name="Galleron N."/>
            <person name="Ghim S.-Y."/>
            <person name="Glaser P."/>
            <person name="Goffeau A."/>
            <person name="Golightly E.J."/>
            <person name="Grandi G."/>
            <person name="Guiseppi G."/>
            <person name="Guy B.J."/>
            <person name="Haga K."/>
            <person name="Haiech J."/>
            <person name="Harwood C.R."/>
            <person name="Henaut A."/>
            <person name="Hilbert H."/>
            <person name="Holsappel S."/>
            <person name="Hosono S."/>
            <person name="Hullo M.-F."/>
            <person name="Itaya M."/>
            <person name="Jones L.-M."/>
            <person name="Joris B."/>
            <person name="Karamata D."/>
            <person name="Kasahara Y."/>
            <person name="Klaerr-Blanchard M."/>
            <person name="Klein C."/>
            <person name="Kobayashi Y."/>
            <person name="Koetter P."/>
            <person name="Koningstein G."/>
            <person name="Krogh S."/>
            <person name="Kumano M."/>
            <person name="Kurita K."/>
            <person name="Lapidus A."/>
            <person name="Lardinois S."/>
            <person name="Lauber J."/>
            <person name="Lazarevic V."/>
            <person name="Lee S.-M."/>
            <person name="Levine A."/>
            <person name="Liu H."/>
            <person name="Masuda S."/>
            <person name="Mauel C."/>
            <person name="Medigue C."/>
            <person name="Medina N."/>
            <person name="Mellado R.P."/>
            <person name="Mizuno M."/>
            <person name="Moestl D."/>
            <person name="Nakai S."/>
            <person name="Noback M."/>
            <person name="Noone D."/>
            <person name="O'Reilly M."/>
            <person name="Ogawa K."/>
            <person name="Ogiwara A."/>
            <person name="Oudega B."/>
            <person name="Park S.-H."/>
            <person name="Parro V."/>
            <person name="Pohl T.M."/>
            <person name="Portetelle D."/>
            <person name="Porwollik S."/>
            <person name="Prescott A.M."/>
            <person name="Presecan E."/>
            <person name="Pujic P."/>
            <person name="Purnelle B."/>
            <person name="Rapoport G."/>
            <person name="Rey M."/>
            <person name="Reynolds S."/>
            <person name="Rieger M."/>
            <person name="Rivolta C."/>
            <person name="Rocha E."/>
            <person name="Roche B."/>
            <person name="Rose M."/>
            <person name="Sadaie Y."/>
            <person name="Sato T."/>
            <person name="Scanlan E."/>
            <person name="Schleich S."/>
            <person name="Schroeter R."/>
            <person name="Scoffone F."/>
            <person name="Sekiguchi J."/>
            <person name="Sekowska A."/>
            <person name="Seror S.J."/>
            <person name="Serror P."/>
            <person name="Shin B.-S."/>
            <person name="Soldo B."/>
            <person name="Sorokin A."/>
            <person name="Tacconi E."/>
            <person name="Takagi T."/>
            <person name="Takahashi H."/>
            <person name="Takemaru K."/>
            <person name="Takeuchi M."/>
            <person name="Tamakoshi A."/>
            <person name="Tanaka T."/>
            <person name="Terpstra P."/>
            <person name="Tognoni A."/>
            <person name="Tosato V."/>
            <person name="Uchiyama S."/>
            <person name="Vandenbol M."/>
            <person name="Vannier F."/>
            <person name="Vassarotti A."/>
            <person name="Viari A."/>
            <person name="Wambutt R."/>
            <person name="Wedler E."/>
            <person name="Wedler H."/>
            <person name="Weitzenegger T."/>
            <person name="Winters P."/>
            <person name="Wipat A."/>
            <person name="Yamamoto H."/>
            <person name="Yamane K."/>
            <person name="Yasumoto K."/>
            <person name="Yata K."/>
            <person name="Yoshida K."/>
            <person name="Yoshikawa H.-F."/>
            <person name="Zumstein E."/>
            <person name="Yoshikawa H."/>
            <person name="Danchin A."/>
        </authorList>
    </citation>
    <scope>NUCLEOTIDE SEQUENCE [LARGE SCALE GENOMIC DNA]</scope>
    <source>
        <strain>168</strain>
    </source>
</reference>
<accession>P42302</accession>
<protein>
    <recommendedName>
        <fullName>Uncharacterized protein YxiK</fullName>
    </recommendedName>
</protein>
<dbReference type="EMBL" id="D83026">
    <property type="protein sequence ID" value="BAA11690.1"/>
    <property type="molecule type" value="Genomic_DNA"/>
</dbReference>
<dbReference type="EMBL" id="AL009126">
    <property type="protein sequence ID" value="CAB15950.1"/>
    <property type="molecule type" value="Genomic_DNA"/>
</dbReference>
<dbReference type="PIR" id="G70077">
    <property type="entry name" value="G70077"/>
</dbReference>
<dbReference type="RefSeq" id="NP_391793.1">
    <property type="nucleotide sequence ID" value="NC_000964.3"/>
</dbReference>
<dbReference type="RefSeq" id="WP_003243382.1">
    <property type="nucleotide sequence ID" value="NZ_OZ025638.1"/>
</dbReference>
<dbReference type="FunCoup" id="P42302">
    <property type="interactions" value="56"/>
</dbReference>
<dbReference type="STRING" id="224308.BSU39140"/>
<dbReference type="PaxDb" id="224308-BSU39140"/>
<dbReference type="EnsemblBacteria" id="CAB15950">
    <property type="protein sequence ID" value="CAB15950"/>
    <property type="gene ID" value="BSU_39140"/>
</dbReference>
<dbReference type="GeneID" id="937483"/>
<dbReference type="KEGG" id="bsu:BSU39140"/>
<dbReference type="PATRIC" id="fig|224308.179.peg.4238"/>
<dbReference type="InParanoid" id="P42302"/>
<dbReference type="OrthoDB" id="2891593at2"/>
<dbReference type="BioCyc" id="BSUB:BSU39140-MONOMER"/>
<dbReference type="Proteomes" id="UP000001570">
    <property type="component" value="Chromosome"/>
</dbReference>
<keyword id="KW-1185">Reference proteome</keyword>
<sequence length="153" mass="17649">MEITSISSIGNLDMIELKPDQTVMACELEDAESFYRFWAGLAYDRIMIQVITTGSFIEDLSEYFEGHAYKVTKLAKREFHFQSILQEADRDIADFLFLLASINDDVFLITDPQPDKSYFSEGKLQCLTDSGERIIWFEYDAVDIYMIGGESYK</sequence>
<proteinExistence type="predicted"/>
<feature type="chain" id="PRO_0000050029" description="Uncharacterized protein YxiK">
    <location>
        <begin position="1"/>
        <end position="153"/>
    </location>
</feature>